<keyword id="KW-0328">Glycosyltransferase</keyword>
<keyword id="KW-0808">Transferase</keyword>
<gene>
    <name evidence="1" type="primary">ppnP</name>
    <name type="ordered locus">SPA2332</name>
</gene>
<dbReference type="EC" id="2.4.2.1" evidence="1"/>
<dbReference type="EC" id="2.4.2.2" evidence="1"/>
<dbReference type="EMBL" id="CP000026">
    <property type="protein sequence ID" value="AAV78217.1"/>
    <property type="molecule type" value="Genomic_DNA"/>
</dbReference>
<dbReference type="RefSeq" id="WP_000941953.1">
    <property type="nucleotide sequence ID" value="NC_006511.1"/>
</dbReference>
<dbReference type="SMR" id="Q5PFU0"/>
<dbReference type="KEGG" id="spt:SPA2332"/>
<dbReference type="HOGENOM" id="CLU_157874_0_0_6"/>
<dbReference type="Proteomes" id="UP000008185">
    <property type="component" value="Chromosome"/>
</dbReference>
<dbReference type="GO" id="GO:0005829">
    <property type="term" value="C:cytosol"/>
    <property type="evidence" value="ECO:0007669"/>
    <property type="project" value="TreeGrafter"/>
</dbReference>
<dbReference type="GO" id="GO:0047975">
    <property type="term" value="F:guanosine phosphorylase activity"/>
    <property type="evidence" value="ECO:0007669"/>
    <property type="project" value="UniProtKB-EC"/>
</dbReference>
<dbReference type="GO" id="GO:0004731">
    <property type="term" value="F:purine-nucleoside phosphorylase activity"/>
    <property type="evidence" value="ECO:0007669"/>
    <property type="project" value="UniProtKB-UniRule"/>
</dbReference>
<dbReference type="GO" id="GO:0009032">
    <property type="term" value="F:thymidine phosphorylase activity"/>
    <property type="evidence" value="ECO:0007669"/>
    <property type="project" value="UniProtKB-EC"/>
</dbReference>
<dbReference type="GO" id="GO:0004850">
    <property type="term" value="F:uridine phosphorylase activity"/>
    <property type="evidence" value="ECO:0007669"/>
    <property type="project" value="UniProtKB-EC"/>
</dbReference>
<dbReference type="CDD" id="cd20296">
    <property type="entry name" value="cupin_PpnP-like"/>
    <property type="match status" value="1"/>
</dbReference>
<dbReference type="FunFam" id="2.60.120.10:FF:000016">
    <property type="entry name" value="Pyrimidine/purine nucleoside phosphorylase"/>
    <property type="match status" value="1"/>
</dbReference>
<dbReference type="Gene3D" id="2.60.120.10">
    <property type="entry name" value="Jelly Rolls"/>
    <property type="match status" value="1"/>
</dbReference>
<dbReference type="HAMAP" id="MF_01537">
    <property type="entry name" value="Nucleos_phosphorylase_PpnP"/>
    <property type="match status" value="1"/>
</dbReference>
<dbReference type="InterPro" id="IPR009664">
    <property type="entry name" value="Ppnp"/>
</dbReference>
<dbReference type="InterPro" id="IPR014710">
    <property type="entry name" value="RmlC-like_jellyroll"/>
</dbReference>
<dbReference type="InterPro" id="IPR011051">
    <property type="entry name" value="RmlC_Cupin_sf"/>
</dbReference>
<dbReference type="NCBIfam" id="NF007875">
    <property type="entry name" value="PRK10579.1"/>
    <property type="match status" value="1"/>
</dbReference>
<dbReference type="PANTHER" id="PTHR36540">
    <property type="entry name" value="PYRIMIDINE/PURINE NUCLEOSIDE PHOSPHORYLASE"/>
    <property type="match status" value="1"/>
</dbReference>
<dbReference type="PANTHER" id="PTHR36540:SF1">
    <property type="entry name" value="PYRIMIDINE_PURINE NUCLEOSIDE PHOSPHORYLASE"/>
    <property type="match status" value="1"/>
</dbReference>
<dbReference type="Pfam" id="PF06865">
    <property type="entry name" value="Ppnp"/>
    <property type="match status" value="1"/>
</dbReference>
<dbReference type="SUPFAM" id="SSF51182">
    <property type="entry name" value="RmlC-like cupins"/>
    <property type="match status" value="1"/>
</dbReference>
<comment type="function">
    <text evidence="1">Catalyzes the phosphorolysis of diverse nucleosides, yielding D-ribose 1-phosphate and the respective free bases. Can use uridine, adenosine, guanosine, cytidine, thymidine, inosine and xanthosine as substrates. Also catalyzes the reverse reactions.</text>
</comment>
<comment type="catalytic activity">
    <reaction evidence="1">
        <text>a purine D-ribonucleoside + phosphate = a purine nucleobase + alpha-D-ribose 1-phosphate</text>
        <dbReference type="Rhea" id="RHEA:19805"/>
        <dbReference type="ChEBI" id="CHEBI:26386"/>
        <dbReference type="ChEBI" id="CHEBI:43474"/>
        <dbReference type="ChEBI" id="CHEBI:57720"/>
        <dbReference type="ChEBI" id="CHEBI:142355"/>
        <dbReference type="EC" id="2.4.2.1"/>
    </reaction>
</comment>
<comment type="catalytic activity">
    <reaction evidence="1">
        <text>adenosine + phosphate = alpha-D-ribose 1-phosphate + adenine</text>
        <dbReference type="Rhea" id="RHEA:27642"/>
        <dbReference type="ChEBI" id="CHEBI:16335"/>
        <dbReference type="ChEBI" id="CHEBI:16708"/>
        <dbReference type="ChEBI" id="CHEBI:43474"/>
        <dbReference type="ChEBI" id="CHEBI:57720"/>
        <dbReference type="EC" id="2.4.2.1"/>
    </reaction>
</comment>
<comment type="catalytic activity">
    <reaction evidence="1">
        <text>cytidine + phosphate = cytosine + alpha-D-ribose 1-phosphate</text>
        <dbReference type="Rhea" id="RHEA:52540"/>
        <dbReference type="ChEBI" id="CHEBI:16040"/>
        <dbReference type="ChEBI" id="CHEBI:17562"/>
        <dbReference type="ChEBI" id="CHEBI:43474"/>
        <dbReference type="ChEBI" id="CHEBI:57720"/>
        <dbReference type="EC" id="2.4.2.2"/>
    </reaction>
</comment>
<comment type="catalytic activity">
    <reaction evidence="1">
        <text>guanosine + phosphate = alpha-D-ribose 1-phosphate + guanine</text>
        <dbReference type="Rhea" id="RHEA:13233"/>
        <dbReference type="ChEBI" id="CHEBI:16235"/>
        <dbReference type="ChEBI" id="CHEBI:16750"/>
        <dbReference type="ChEBI" id="CHEBI:43474"/>
        <dbReference type="ChEBI" id="CHEBI:57720"/>
        <dbReference type="EC" id="2.4.2.1"/>
    </reaction>
</comment>
<comment type="catalytic activity">
    <reaction evidence="1">
        <text>inosine + phosphate = alpha-D-ribose 1-phosphate + hypoxanthine</text>
        <dbReference type="Rhea" id="RHEA:27646"/>
        <dbReference type="ChEBI" id="CHEBI:17368"/>
        <dbReference type="ChEBI" id="CHEBI:17596"/>
        <dbReference type="ChEBI" id="CHEBI:43474"/>
        <dbReference type="ChEBI" id="CHEBI:57720"/>
        <dbReference type="EC" id="2.4.2.1"/>
    </reaction>
</comment>
<comment type="catalytic activity">
    <reaction evidence="1">
        <text>thymidine + phosphate = 2-deoxy-alpha-D-ribose 1-phosphate + thymine</text>
        <dbReference type="Rhea" id="RHEA:16037"/>
        <dbReference type="ChEBI" id="CHEBI:17748"/>
        <dbReference type="ChEBI" id="CHEBI:17821"/>
        <dbReference type="ChEBI" id="CHEBI:43474"/>
        <dbReference type="ChEBI" id="CHEBI:57259"/>
        <dbReference type="EC" id="2.4.2.2"/>
    </reaction>
</comment>
<comment type="catalytic activity">
    <reaction evidence="1">
        <text>uridine + phosphate = alpha-D-ribose 1-phosphate + uracil</text>
        <dbReference type="Rhea" id="RHEA:24388"/>
        <dbReference type="ChEBI" id="CHEBI:16704"/>
        <dbReference type="ChEBI" id="CHEBI:17568"/>
        <dbReference type="ChEBI" id="CHEBI:43474"/>
        <dbReference type="ChEBI" id="CHEBI:57720"/>
        <dbReference type="EC" id="2.4.2.2"/>
    </reaction>
</comment>
<comment type="catalytic activity">
    <reaction evidence="1">
        <text>xanthosine + phosphate = alpha-D-ribose 1-phosphate + xanthine</text>
        <dbReference type="Rhea" id="RHEA:27638"/>
        <dbReference type="ChEBI" id="CHEBI:17712"/>
        <dbReference type="ChEBI" id="CHEBI:18107"/>
        <dbReference type="ChEBI" id="CHEBI:43474"/>
        <dbReference type="ChEBI" id="CHEBI:57720"/>
        <dbReference type="EC" id="2.4.2.1"/>
    </reaction>
</comment>
<comment type="similarity">
    <text evidence="1">Belongs to the nucleoside phosphorylase PpnP family.</text>
</comment>
<accession>Q5PFU0</accession>
<feature type="chain" id="PRO_0000211779" description="Pyrimidine/purine nucleoside phosphorylase">
    <location>
        <begin position="1"/>
        <end position="94"/>
    </location>
</feature>
<name>PPNP_SALPA</name>
<proteinExistence type="inferred from homology"/>
<evidence type="ECO:0000255" key="1">
    <source>
        <dbReference type="HAMAP-Rule" id="MF_01537"/>
    </source>
</evidence>
<protein>
    <recommendedName>
        <fullName evidence="1">Pyrimidine/purine nucleoside phosphorylase</fullName>
        <ecNumber evidence="1">2.4.2.1</ecNumber>
        <ecNumber evidence="1">2.4.2.2</ecNumber>
    </recommendedName>
    <alternativeName>
        <fullName evidence="1">Adenosine phosphorylase</fullName>
    </alternativeName>
    <alternativeName>
        <fullName evidence="1">Cytidine phosphorylase</fullName>
    </alternativeName>
    <alternativeName>
        <fullName evidence="1">Guanosine phosphorylase</fullName>
    </alternativeName>
    <alternativeName>
        <fullName evidence="1">Inosine phosphorylase</fullName>
    </alternativeName>
    <alternativeName>
        <fullName evidence="1">Thymidine phosphorylase</fullName>
    </alternativeName>
    <alternativeName>
        <fullName evidence="1">Uridine phosphorylase</fullName>
    </alternativeName>
    <alternativeName>
        <fullName evidence="1">Xanthosine phosphorylase</fullName>
    </alternativeName>
</protein>
<organism>
    <name type="scientific">Salmonella paratyphi A (strain ATCC 9150 / SARB42)</name>
    <dbReference type="NCBI Taxonomy" id="295319"/>
    <lineage>
        <taxon>Bacteria</taxon>
        <taxon>Pseudomonadati</taxon>
        <taxon>Pseudomonadota</taxon>
        <taxon>Gammaproteobacteria</taxon>
        <taxon>Enterobacterales</taxon>
        <taxon>Enterobacteriaceae</taxon>
        <taxon>Salmonella</taxon>
    </lineage>
</organism>
<reference key="1">
    <citation type="journal article" date="2004" name="Nat. Genet.">
        <title>Comparison of genome degradation in Paratyphi A and Typhi, human-restricted serovars of Salmonella enterica that cause typhoid.</title>
        <authorList>
            <person name="McClelland M."/>
            <person name="Sanderson K.E."/>
            <person name="Clifton S.W."/>
            <person name="Latreille P."/>
            <person name="Porwollik S."/>
            <person name="Sabo A."/>
            <person name="Meyer R."/>
            <person name="Bieri T."/>
            <person name="Ozersky P."/>
            <person name="McLellan M."/>
            <person name="Harkins C.R."/>
            <person name="Wang C."/>
            <person name="Nguyen C."/>
            <person name="Berghoff A."/>
            <person name="Elliott G."/>
            <person name="Kohlberg S."/>
            <person name="Strong C."/>
            <person name="Du F."/>
            <person name="Carter J."/>
            <person name="Kremizki C."/>
            <person name="Layman D."/>
            <person name="Leonard S."/>
            <person name="Sun H."/>
            <person name="Fulton L."/>
            <person name="Nash W."/>
            <person name="Miner T."/>
            <person name="Minx P."/>
            <person name="Delehaunty K."/>
            <person name="Fronick C."/>
            <person name="Magrini V."/>
            <person name="Nhan M."/>
            <person name="Warren W."/>
            <person name="Florea L."/>
            <person name="Spieth J."/>
            <person name="Wilson R.K."/>
        </authorList>
    </citation>
    <scope>NUCLEOTIDE SEQUENCE [LARGE SCALE GENOMIC DNA]</scope>
    <source>
        <strain>ATCC 9150 / SARB42</strain>
    </source>
</reference>
<sequence>MLQSNEYFSGKVKSIGFTSSSTGRASVGVMAEGEYTFGTAEPEEMTVVSGALKVLLPGTVEWKVYTAGEVFNVPGHSEFHLQVAEPTSYLCRYL</sequence>